<dbReference type="EC" id="3.1.26.5" evidence="1"/>
<dbReference type="EMBL" id="CP000419">
    <property type="protein sequence ID" value="ABJ66922.1"/>
    <property type="molecule type" value="Genomic_DNA"/>
</dbReference>
<dbReference type="RefSeq" id="WP_011681662.1">
    <property type="nucleotide sequence ID" value="NC_008532.1"/>
</dbReference>
<dbReference type="SMR" id="Q03IQ0"/>
<dbReference type="KEGG" id="ste:STER_1790"/>
<dbReference type="HOGENOM" id="CLU_117179_9_1_9"/>
<dbReference type="GO" id="GO:0030677">
    <property type="term" value="C:ribonuclease P complex"/>
    <property type="evidence" value="ECO:0007669"/>
    <property type="project" value="TreeGrafter"/>
</dbReference>
<dbReference type="GO" id="GO:0042781">
    <property type="term" value="F:3'-tRNA processing endoribonuclease activity"/>
    <property type="evidence" value="ECO:0007669"/>
    <property type="project" value="TreeGrafter"/>
</dbReference>
<dbReference type="GO" id="GO:0004526">
    <property type="term" value="F:ribonuclease P activity"/>
    <property type="evidence" value="ECO:0007669"/>
    <property type="project" value="UniProtKB-UniRule"/>
</dbReference>
<dbReference type="GO" id="GO:0000049">
    <property type="term" value="F:tRNA binding"/>
    <property type="evidence" value="ECO:0007669"/>
    <property type="project" value="UniProtKB-UniRule"/>
</dbReference>
<dbReference type="GO" id="GO:0001682">
    <property type="term" value="P:tRNA 5'-leader removal"/>
    <property type="evidence" value="ECO:0007669"/>
    <property type="project" value="UniProtKB-UniRule"/>
</dbReference>
<dbReference type="FunFam" id="3.30.230.10:FF:000021">
    <property type="entry name" value="Ribonuclease P protein component"/>
    <property type="match status" value="1"/>
</dbReference>
<dbReference type="Gene3D" id="3.30.230.10">
    <property type="match status" value="1"/>
</dbReference>
<dbReference type="HAMAP" id="MF_00227">
    <property type="entry name" value="RNase_P"/>
    <property type="match status" value="1"/>
</dbReference>
<dbReference type="InterPro" id="IPR020568">
    <property type="entry name" value="Ribosomal_Su5_D2-typ_SF"/>
</dbReference>
<dbReference type="InterPro" id="IPR014721">
    <property type="entry name" value="Ribsml_uS5_D2-typ_fold_subgr"/>
</dbReference>
<dbReference type="InterPro" id="IPR000100">
    <property type="entry name" value="RNase_P"/>
</dbReference>
<dbReference type="InterPro" id="IPR020539">
    <property type="entry name" value="RNase_P_CS"/>
</dbReference>
<dbReference type="NCBIfam" id="TIGR00188">
    <property type="entry name" value="rnpA"/>
    <property type="match status" value="1"/>
</dbReference>
<dbReference type="PANTHER" id="PTHR33992">
    <property type="entry name" value="RIBONUCLEASE P PROTEIN COMPONENT"/>
    <property type="match status" value="1"/>
</dbReference>
<dbReference type="PANTHER" id="PTHR33992:SF1">
    <property type="entry name" value="RIBONUCLEASE P PROTEIN COMPONENT"/>
    <property type="match status" value="1"/>
</dbReference>
<dbReference type="Pfam" id="PF00825">
    <property type="entry name" value="Ribonuclease_P"/>
    <property type="match status" value="1"/>
</dbReference>
<dbReference type="SUPFAM" id="SSF54211">
    <property type="entry name" value="Ribosomal protein S5 domain 2-like"/>
    <property type="match status" value="1"/>
</dbReference>
<dbReference type="PROSITE" id="PS00648">
    <property type="entry name" value="RIBONUCLEASE_P"/>
    <property type="match status" value="1"/>
</dbReference>
<feature type="chain" id="PRO_1000021482" description="Ribonuclease P protein component">
    <location>
        <begin position="1"/>
        <end position="111"/>
    </location>
</feature>
<accession>Q03IQ0</accession>
<evidence type="ECO:0000255" key="1">
    <source>
        <dbReference type="HAMAP-Rule" id="MF_00227"/>
    </source>
</evidence>
<reference key="1">
    <citation type="journal article" date="2006" name="Proc. Natl. Acad. Sci. U.S.A.">
        <title>Comparative genomics of the lactic acid bacteria.</title>
        <authorList>
            <person name="Makarova K.S."/>
            <person name="Slesarev A."/>
            <person name="Wolf Y.I."/>
            <person name="Sorokin A."/>
            <person name="Mirkin B."/>
            <person name="Koonin E.V."/>
            <person name="Pavlov A."/>
            <person name="Pavlova N."/>
            <person name="Karamychev V."/>
            <person name="Polouchine N."/>
            <person name="Shakhova V."/>
            <person name="Grigoriev I."/>
            <person name="Lou Y."/>
            <person name="Rohksar D."/>
            <person name="Lucas S."/>
            <person name="Huang K."/>
            <person name="Goodstein D.M."/>
            <person name="Hawkins T."/>
            <person name="Plengvidhya V."/>
            <person name="Welker D."/>
            <person name="Hughes J."/>
            <person name="Goh Y."/>
            <person name="Benson A."/>
            <person name="Baldwin K."/>
            <person name="Lee J.-H."/>
            <person name="Diaz-Muniz I."/>
            <person name="Dosti B."/>
            <person name="Smeianov V."/>
            <person name="Wechter W."/>
            <person name="Barabote R."/>
            <person name="Lorca G."/>
            <person name="Altermann E."/>
            <person name="Barrangou R."/>
            <person name="Ganesan B."/>
            <person name="Xie Y."/>
            <person name="Rawsthorne H."/>
            <person name="Tamir D."/>
            <person name="Parker C."/>
            <person name="Breidt F."/>
            <person name="Broadbent J.R."/>
            <person name="Hutkins R."/>
            <person name="O'Sullivan D."/>
            <person name="Steele J."/>
            <person name="Unlu G."/>
            <person name="Saier M.H. Jr."/>
            <person name="Klaenhammer T."/>
            <person name="Richardson P."/>
            <person name="Kozyavkin S."/>
            <person name="Weimer B.C."/>
            <person name="Mills D.A."/>
        </authorList>
    </citation>
    <scope>NUCLEOTIDE SEQUENCE [LARGE SCALE GENOMIC DNA]</scope>
    <source>
        <strain>ATCC BAA-491 / LMD-9</strain>
    </source>
</reference>
<name>RNPA_STRTD</name>
<organism>
    <name type="scientific">Streptococcus thermophilus (strain ATCC BAA-491 / LMD-9)</name>
    <dbReference type="NCBI Taxonomy" id="322159"/>
    <lineage>
        <taxon>Bacteria</taxon>
        <taxon>Bacillati</taxon>
        <taxon>Bacillota</taxon>
        <taxon>Bacilli</taxon>
        <taxon>Lactobacillales</taxon>
        <taxon>Streptococcaceae</taxon>
        <taxon>Streptococcus</taxon>
    </lineage>
</organism>
<sequence>MKKSYRVKKEKDFKALFDAGHSVANRKFVVYCLDRNLPHFRVGLSVSKRLGNAVTRNRVKRRLRHALMDMSSQLENQDFVVIARKGVEDLSYQDIYSNLVHVLKIAKLYKD</sequence>
<gene>
    <name evidence="1" type="primary">rnpA</name>
    <name type="ordered locus">STER_1790</name>
</gene>
<comment type="function">
    <text evidence="1">RNaseP catalyzes the removal of the 5'-leader sequence from pre-tRNA to produce the mature 5'-terminus. It can also cleave other RNA substrates such as 4.5S RNA. The protein component plays an auxiliary but essential role in vivo by binding to the 5'-leader sequence and broadening the substrate specificity of the ribozyme.</text>
</comment>
<comment type="catalytic activity">
    <reaction evidence="1">
        <text>Endonucleolytic cleavage of RNA, removing 5'-extranucleotides from tRNA precursor.</text>
        <dbReference type="EC" id="3.1.26.5"/>
    </reaction>
</comment>
<comment type="subunit">
    <text evidence="1">Consists of a catalytic RNA component (M1 or rnpB) and a protein subunit.</text>
</comment>
<comment type="similarity">
    <text evidence="1">Belongs to the RnpA family.</text>
</comment>
<proteinExistence type="inferred from homology"/>
<keyword id="KW-0255">Endonuclease</keyword>
<keyword id="KW-0378">Hydrolase</keyword>
<keyword id="KW-0540">Nuclease</keyword>
<keyword id="KW-0694">RNA-binding</keyword>
<keyword id="KW-0819">tRNA processing</keyword>
<protein>
    <recommendedName>
        <fullName evidence="1">Ribonuclease P protein component</fullName>
        <shortName evidence="1">RNase P protein</shortName>
        <shortName evidence="1">RNaseP protein</shortName>
        <ecNumber evidence="1">3.1.26.5</ecNumber>
    </recommendedName>
    <alternativeName>
        <fullName evidence="1">Protein C5</fullName>
    </alternativeName>
</protein>